<comment type="function">
    <text evidence="1">Catalyzes the dephosphorylation of undecaprenyl diphosphate (UPP). Confers resistance to bacitracin.</text>
</comment>
<comment type="catalytic activity">
    <reaction evidence="1">
        <text>di-trans,octa-cis-undecaprenyl diphosphate + H2O = di-trans,octa-cis-undecaprenyl phosphate + phosphate + H(+)</text>
        <dbReference type="Rhea" id="RHEA:28094"/>
        <dbReference type="ChEBI" id="CHEBI:15377"/>
        <dbReference type="ChEBI" id="CHEBI:15378"/>
        <dbReference type="ChEBI" id="CHEBI:43474"/>
        <dbReference type="ChEBI" id="CHEBI:58405"/>
        <dbReference type="ChEBI" id="CHEBI:60392"/>
        <dbReference type="EC" id="3.6.1.27"/>
    </reaction>
</comment>
<comment type="subcellular location">
    <subcellularLocation>
        <location evidence="1">Cell membrane</location>
        <topology evidence="1">Multi-pass membrane protein</topology>
    </subcellularLocation>
</comment>
<comment type="miscellaneous">
    <text>Bacitracin is thought to be involved in the inhibition of peptidoglycan synthesis by sequestering undecaprenyl diphosphate, thereby reducing the pool of lipid carrier available.</text>
</comment>
<comment type="similarity">
    <text evidence="1">Belongs to the UppP family.</text>
</comment>
<feature type="chain" id="PRO_0000151085" description="Undecaprenyl-diphosphatase 1">
    <location>
        <begin position="1"/>
        <end position="265"/>
    </location>
</feature>
<feature type="transmembrane region" description="Helical" evidence="1">
    <location>
        <begin position="4"/>
        <end position="24"/>
    </location>
</feature>
<feature type="transmembrane region" description="Helical" evidence="1">
    <location>
        <begin position="42"/>
        <end position="62"/>
    </location>
</feature>
<feature type="transmembrane region" description="Helical" evidence="1">
    <location>
        <begin position="84"/>
        <end position="104"/>
    </location>
</feature>
<feature type="transmembrane region" description="Helical" evidence="1">
    <location>
        <begin position="108"/>
        <end position="128"/>
    </location>
</feature>
<feature type="transmembrane region" description="Helical" evidence="1">
    <location>
        <begin position="184"/>
        <end position="204"/>
    </location>
</feature>
<feature type="transmembrane region" description="Helical" evidence="1">
    <location>
        <begin position="217"/>
        <end position="237"/>
    </location>
</feature>
<feature type="transmembrane region" description="Helical" evidence="1">
    <location>
        <begin position="245"/>
        <end position="265"/>
    </location>
</feature>
<keyword id="KW-0046">Antibiotic resistance</keyword>
<keyword id="KW-1003">Cell membrane</keyword>
<keyword id="KW-0133">Cell shape</keyword>
<keyword id="KW-0961">Cell wall biogenesis/degradation</keyword>
<keyword id="KW-0378">Hydrolase</keyword>
<keyword id="KW-0472">Membrane</keyword>
<keyword id="KW-0573">Peptidoglycan synthesis</keyword>
<keyword id="KW-1185">Reference proteome</keyword>
<keyword id="KW-0812">Transmembrane</keyword>
<keyword id="KW-1133">Transmembrane helix</keyword>
<gene>
    <name evidence="1" type="primary">uppP1</name>
    <name type="synonym">bacA-1</name>
    <name type="synonym">bacA1</name>
    <name type="synonym">upk1</name>
    <name type="ordered locus">BA_0283</name>
    <name type="ordered locus">GBAA_0283</name>
    <name type="ordered locus">BAS0269</name>
</gene>
<evidence type="ECO:0000255" key="1">
    <source>
        <dbReference type="HAMAP-Rule" id="MF_01006"/>
    </source>
</evidence>
<reference key="1">
    <citation type="journal article" date="2003" name="Nature">
        <title>The genome sequence of Bacillus anthracis Ames and comparison to closely related bacteria.</title>
        <authorList>
            <person name="Read T.D."/>
            <person name="Peterson S.N."/>
            <person name="Tourasse N.J."/>
            <person name="Baillie L.W."/>
            <person name="Paulsen I.T."/>
            <person name="Nelson K.E."/>
            <person name="Tettelin H."/>
            <person name="Fouts D.E."/>
            <person name="Eisen J.A."/>
            <person name="Gill S.R."/>
            <person name="Holtzapple E.K."/>
            <person name="Okstad O.A."/>
            <person name="Helgason E."/>
            <person name="Rilstone J."/>
            <person name="Wu M."/>
            <person name="Kolonay J.F."/>
            <person name="Beanan M.J."/>
            <person name="Dodson R.J."/>
            <person name="Brinkac L.M."/>
            <person name="Gwinn M.L."/>
            <person name="DeBoy R.T."/>
            <person name="Madpu R."/>
            <person name="Daugherty S.C."/>
            <person name="Durkin A.S."/>
            <person name="Haft D.H."/>
            <person name="Nelson W.C."/>
            <person name="Peterson J.D."/>
            <person name="Pop M."/>
            <person name="Khouri H.M."/>
            <person name="Radune D."/>
            <person name="Benton J.L."/>
            <person name="Mahamoud Y."/>
            <person name="Jiang L."/>
            <person name="Hance I.R."/>
            <person name="Weidman J.F."/>
            <person name="Berry K.J."/>
            <person name="Plaut R.D."/>
            <person name="Wolf A.M."/>
            <person name="Watkins K.L."/>
            <person name="Nierman W.C."/>
            <person name="Hazen A."/>
            <person name="Cline R.T."/>
            <person name="Redmond C."/>
            <person name="Thwaite J.E."/>
            <person name="White O."/>
            <person name="Salzberg S.L."/>
            <person name="Thomason B."/>
            <person name="Friedlander A.M."/>
            <person name="Koehler T.M."/>
            <person name="Hanna P.C."/>
            <person name="Kolstoe A.-B."/>
            <person name="Fraser C.M."/>
        </authorList>
    </citation>
    <scope>NUCLEOTIDE SEQUENCE [LARGE SCALE GENOMIC DNA]</scope>
    <source>
        <strain>Ames / isolate Porton</strain>
    </source>
</reference>
<reference key="2">
    <citation type="journal article" date="2009" name="J. Bacteriol.">
        <title>The complete genome sequence of Bacillus anthracis Ames 'Ancestor'.</title>
        <authorList>
            <person name="Ravel J."/>
            <person name="Jiang L."/>
            <person name="Stanley S.T."/>
            <person name="Wilson M.R."/>
            <person name="Decker R.S."/>
            <person name="Read T.D."/>
            <person name="Worsham P."/>
            <person name="Keim P.S."/>
            <person name="Salzberg S.L."/>
            <person name="Fraser-Liggett C.M."/>
            <person name="Rasko D.A."/>
        </authorList>
    </citation>
    <scope>NUCLEOTIDE SEQUENCE [LARGE SCALE GENOMIC DNA]</scope>
    <source>
        <strain>Ames ancestor</strain>
    </source>
</reference>
<reference key="3">
    <citation type="submission" date="2004-01" db="EMBL/GenBank/DDBJ databases">
        <title>Complete genome sequence of Bacillus anthracis Sterne.</title>
        <authorList>
            <person name="Brettin T.S."/>
            <person name="Bruce D."/>
            <person name="Challacombe J.F."/>
            <person name="Gilna P."/>
            <person name="Han C."/>
            <person name="Hill K."/>
            <person name="Hitchcock P."/>
            <person name="Jackson P."/>
            <person name="Keim P."/>
            <person name="Longmire J."/>
            <person name="Lucas S."/>
            <person name="Okinaka R."/>
            <person name="Richardson P."/>
            <person name="Rubin E."/>
            <person name="Tice H."/>
        </authorList>
    </citation>
    <scope>NUCLEOTIDE SEQUENCE [LARGE SCALE GENOMIC DNA]</scope>
    <source>
        <strain>Sterne</strain>
    </source>
</reference>
<sequence length="265" mass="29032">MSDIITAFILGIVEGLAEFLPISSTGHLILVGHLLGFEGERAKTFEIVIQLGAILAIAILYHKRLVSLCNLKPLLRKEKKFNAFHVFLGVFPAVVAGLLLHDVIKTYLFQPYTVVIGLVAGAILMIFAEVKKQEATSYSLDDLTYRQALTIGLFQCLAVYPGFSRAGSTISGGLLAKVNYKTASEFSFLIALPVMVGATGLDLLKSWTYLSVDDIPMFAVGFITSFIVAMLAVVTFLKLLEKIGLKPFAYYRILLAILFTVFVLL</sequence>
<name>UPPP1_BACAN</name>
<accession>Q81VC9</accession>
<accession>Q6I4D0</accession>
<accession>Q6KY33</accession>
<proteinExistence type="inferred from homology"/>
<organism>
    <name type="scientific">Bacillus anthracis</name>
    <dbReference type="NCBI Taxonomy" id="1392"/>
    <lineage>
        <taxon>Bacteria</taxon>
        <taxon>Bacillati</taxon>
        <taxon>Bacillota</taxon>
        <taxon>Bacilli</taxon>
        <taxon>Bacillales</taxon>
        <taxon>Bacillaceae</taxon>
        <taxon>Bacillus</taxon>
        <taxon>Bacillus cereus group</taxon>
    </lineage>
</organism>
<dbReference type="EC" id="3.6.1.27" evidence="1"/>
<dbReference type="EMBL" id="AE016879">
    <property type="protein sequence ID" value="AAP24319.1"/>
    <property type="molecule type" value="Genomic_DNA"/>
</dbReference>
<dbReference type="EMBL" id="AE017334">
    <property type="protein sequence ID" value="AAT29368.1"/>
    <property type="molecule type" value="Genomic_DNA"/>
</dbReference>
<dbReference type="EMBL" id="AE017225">
    <property type="protein sequence ID" value="AAT52601.1"/>
    <property type="molecule type" value="Genomic_DNA"/>
</dbReference>
<dbReference type="RefSeq" id="NP_842833.1">
    <property type="nucleotide sequence ID" value="NC_003997.3"/>
</dbReference>
<dbReference type="RefSeq" id="YP_026550.1">
    <property type="nucleotide sequence ID" value="NC_005945.1"/>
</dbReference>
<dbReference type="SMR" id="Q81VC9"/>
<dbReference type="STRING" id="261594.GBAA_0283"/>
<dbReference type="DNASU" id="1085701"/>
<dbReference type="GeneID" id="45020339"/>
<dbReference type="KEGG" id="ban:BA_0283"/>
<dbReference type="KEGG" id="banh:HYU01_01540"/>
<dbReference type="KEGG" id="bar:GBAA_0283"/>
<dbReference type="KEGG" id="bat:BAS0269"/>
<dbReference type="PATRIC" id="fig|198094.11.peg.274"/>
<dbReference type="eggNOG" id="COG1968">
    <property type="taxonomic scope" value="Bacteria"/>
</dbReference>
<dbReference type="HOGENOM" id="CLU_060296_2_0_9"/>
<dbReference type="OMA" id="GVYKIPE"/>
<dbReference type="OrthoDB" id="9808289at2"/>
<dbReference type="Proteomes" id="UP000000427">
    <property type="component" value="Chromosome"/>
</dbReference>
<dbReference type="Proteomes" id="UP000000594">
    <property type="component" value="Chromosome"/>
</dbReference>
<dbReference type="GO" id="GO:0005886">
    <property type="term" value="C:plasma membrane"/>
    <property type="evidence" value="ECO:0007669"/>
    <property type="project" value="UniProtKB-SubCell"/>
</dbReference>
<dbReference type="GO" id="GO:0050380">
    <property type="term" value="F:undecaprenyl-diphosphatase activity"/>
    <property type="evidence" value="ECO:0007669"/>
    <property type="project" value="UniProtKB-UniRule"/>
</dbReference>
<dbReference type="GO" id="GO:0071555">
    <property type="term" value="P:cell wall organization"/>
    <property type="evidence" value="ECO:0007669"/>
    <property type="project" value="UniProtKB-KW"/>
</dbReference>
<dbReference type="GO" id="GO:0009252">
    <property type="term" value="P:peptidoglycan biosynthetic process"/>
    <property type="evidence" value="ECO:0007669"/>
    <property type="project" value="UniProtKB-KW"/>
</dbReference>
<dbReference type="GO" id="GO:0008360">
    <property type="term" value="P:regulation of cell shape"/>
    <property type="evidence" value="ECO:0007669"/>
    <property type="project" value="UniProtKB-KW"/>
</dbReference>
<dbReference type="GO" id="GO:0046677">
    <property type="term" value="P:response to antibiotic"/>
    <property type="evidence" value="ECO:0007669"/>
    <property type="project" value="UniProtKB-UniRule"/>
</dbReference>
<dbReference type="HAMAP" id="MF_01006">
    <property type="entry name" value="Undec_diphosphatase"/>
    <property type="match status" value="1"/>
</dbReference>
<dbReference type="InterPro" id="IPR003824">
    <property type="entry name" value="UppP"/>
</dbReference>
<dbReference type="NCBIfam" id="NF001388">
    <property type="entry name" value="PRK00281.1-1"/>
    <property type="match status" value="1"/>
</dbReference>
<dbReference type="NCBIfam" id="NF001389">
    <property type="entry name" value="PRK00281.1-2"/>
    <property type="match status" value="1"/>
</dbReference>
<dbReference type="NCBIfam" id="NF001390">
    <property type="entry name" value="PRK00281.1-4"/>
    <property type="match status" value="1"/>
</dbReference>
<dbReference type="NCBIfam" id="TIGR00753">
    <property type="entry name" value="undec_PP_bacA"/>
    <property type="match status" value="1"/>
</dbReference>
<dbReference type="PANTHER" id="PTHR30622">
    <property type="entry name" value="UNDECAPRENYL-DIPHOSPHATASE"/>
    <property type="match status" value="1"/>
</dbReference>
<dbReference type="PANTHER" id="PTHR30622:SF3">
    <property type="entry name" value="UNDECAPRENYL-DIPHOSPHATASE"/>
    <property type="match status" value="1"/>
</dbReference>
<dbReference type="Pfam" id="PF02673">
    <property type="entry name" value="BacA"/>
    <property type="match status" value="1"/>
</dbReference>
<protein>
    <recommendedName>
        <fullName evidence="1">Undecaprenyl-diphosphatase 1</fullName>
        <ecNumber evidence="1">3.6.1.27</ecNumber>
    </recommendedName>
    <alternativeName>
        <fullName evidence="1">Bacitracin resistance protein 1</fullName>
    </alternativeName>
    <alternativeName>
        <fullName evidence="1">Undecaprenyl pyrophosphate phosphatase 1</fullName>
    </alternativeName>
</protein>